<accession>B0UWH0</accession>
<comment type="function">
    <text evidence="1">F(1)F(0) ATP synthase produces ATP from ADP in the presence of a proton or sodium gradient. F-type ATPases consist of two structural domains, F(1) containing the extramembraneous catalytic core and F(0) containing the membrane proton channel, linked together by a central stalk and a peripheral stalk. During catalysis, ATP synthesis in the catalytic domain of F(1) is coupled via a rotary mechanism of the central stalk subunits to proton translocation.</text>
</comment>
<comment type="function">
    <text evidence="1">Key component of the F(0) channel; it plays a direct role in translocation across the membrane. A homomeric c-ring of between 10-14 subunits forms the central stalk rotor element with the F(1) delta and epsilon subunits.</text>
</comment>
<comment type="subunit">
    <text evidence="1">F-type ATPases have 2 components, F(1) - the catalytic core - and F(0) - the membrane proton channel. F(1) has five subunits: alpha(3), beta(3), gamma(1), delta(1), epsilon(1). F(0) has three main subunits: a(1), b(2) and c(10-14). The alpha and beta chains form an alternating ring which encloses part of the gamma chain. F(1) is attached to F(0) by a central stalk formed by the gamma and epsilon chains, while a peripheral stalk is formed by the delta and b chains.</text>
</comment>
<comment type="subcellular location">
    <subcellularLocation>
        <location evidence="1">Cell inner membrane</location>
        <topology evidence="1">Multi-pass membrane protein</topology>
    </subcellularLocation>
</comment>
<comment type="similarity">
    <text evidence="1">Belongs to the ATPase C chain family.</text>
</comment>
<organism>
    <name type="scientific">Histophilus somni (strain 2336)</name>
    <name type="common">Haemophilus somnus</name>
    <dbReference type="NCBI Taxonomy" id="228400"/>
    <lineage>
        <taxon>Bacteria</taxon>
        <taxon>Pseudomonadati</taxon>
        <taxon>Pseudomonadota</taxon>
        <taxon>Gammaproteobacteria</taxon>
        <taxon>Pasteurellales</taxon>
        <taxon>Pasteurellaceae</taxon>
        <taxon>Histophilus</taxon>
    </lineage>
</organism>
<sequence>MENIITATIFGSVILLAAAALGTAIGFSLLGGKFLESSARQPELAASLQTKMFIVAGLLDAISMIAVGIALLFIFANPFIGLLN</sequence>
<gene>
    <name evidence="1" type="primary">atpE</name>
    <name type="ordered locus">HSM_1855</name>
</gene>
<name>ATPL_HISS2</name>
<reference key="1">
    <citation type="submission" date="2008-02" db="EMBL/GenBank/DDBJ databases">
        <title>Complete sequence of Haemophilus somnus 2336.</title>
        <authorList>
            <consortium name="US DOE Joint Genome Institute"/>
            <person name="Siddaramappa S."/>
            <person name="Duncan A.J."/>
            <person name="Challacombe J.F."/>
            <person name="Rainey D."/>
            <person name="Gillaspy A.F."/>
            <person name="Carson M."/>
            <person name="Gipson J."/>
            <person name="Gipson M."/>
            <person name="Bruce D."/>
            <person name="Detter J.C."/>
            <person name="Han C.S."/>
            <person name="Land M."/>
            <person name="Tapia R."/>
            <person name="Thompson L.S."/>
            <person name="Orvis J."/>
            <person name="Zaitshik J."/>
            <person name="Barnes G."/>
            <person name="Brettin T.S."/>
            <person name="Dyer D.W."/>
            <person name="Inzana T.J."/>
        </authorList>
    </citation>
    <scope>NUCLEOTIDE SEQUENCE [LARGE SCALE GENOMIC DNA]</scope>
    <source>
        <strain>2336</strain>
    </source>
</reference>
<proteinExistence type="inferred from homology"/>
<dbReference type="EMBL" id="CP000947">
    <property type="protein sequence ID" value="ACA31644.1"/>
    <property type="molecule type" value="Genomic_DNA"/>
</dbReference>
<dbReference type="RefSeq" id="WP_012340945.1">
    <property type="nucleotide sequence ID" value="NC_010519.1"/>
</dbReference>
<dbReference type="SMR" id="B0UWH0"/>
<dbReference type="STRING" id="228400.HSM_1855"/>
<dbReference type="GeneID" id="31488162"/>
<dbReference type="KEGG" id="hsm:HSM_1855"/>
<dbReference type="HOGENOM" id="CLU_148047_1_0_6"/>
<dbReference type="GO" id="GO:0005886">
    <property type="term" value="C:plasma membrane"/>
    <property type="evidence" value="ECO:0007669"/>
    <property type="project" value="UniProtKB-SubCell"/>
</dbReference>
<dbReference type="GO" id="GO:0045259">
    <property type="term" value="C:proton-transporting ATP synthase complex"/>
    <property type="evidence" value="ECO:0007669"/>
    <property type="project" value="UniProtKB-KW"/>
</dbReference>
<dbReference type="GO" id="GO:0033177">
    <property type="term" value="C:proton-transporting two-sector ATPase complex, proton-transporting domain"/>
    <property type="evidence" value="ECO:0007669"/>
    <property type="project" value="InterPro"/>
</dbReference>
<dbReference type="GO" id="GO:0008289">
    <property type="term" value="F:lipid binding"/>
    <property type="evidence" value="ECO:0007669"/>
    <property type="project" value="UniProtKB-KW"/>
</dbReference>
<dbReference type="GO" id="GO:0046933">
    <property type="term" value="F:proton-transporting ATP synthase activity, rotational mechanism"/>
    <property type="evidence" value="ECO:0007669"/>
    <property type="project" value="UniProtKB-UniRule"/>
</dbReference>
<dbReference type="CDD" id="cd18185">
    <property type="entry name" value="ATP-synt_Fo_c_ATPE"/>
    <property type="match status" value="1"/>
</dbReference>
<dbReference type="FunFam" id="1.20.20.10:FF:000002">
    <property type="entry name" value="ATP synthase subunit c"/>
    <property type="match status" value="1"/>
</dbReference>
<dbReference type="Gene3D" id="1.20.20.10">
    <property type="entry name" value="F1F0 ATP synthase subunit C"/>
    <property type="match status" value="1"/>
</dbReference>
<dbReference type="HAMAP" id="MF_01396">
    <property type="entry name" value="ATP_synth_c_bact"/>
    <property type="match status" value="1"/>
</dbReference>
<dbReference type="InterPro" id="IPR005953">
    <property type="entry name" value="ATP_synth_csu_bac/chlpt"/>
</dbReference>
<dbReference type="InterPro" id="IPR000454">
    <property type="entry name" value="ATP_synth_F0_csu"/>
</dbReference>
<dbReference type="InterPro" id="IPR020537">
    <property type="entry name" value="ATP_synth_F0_csu_DDCD_BS"/>
</dbReference>
<dbReference type="InterPro" id="IPR038662">
    <property type="entry name" value="ATP_synth_F0_csu_sf"/>
</dbReference>
<dbReference type="InterPro" id="IPR002379">
    <property type="entry name" value="ATPase_proteolipid_c-like_dom"/>
</dbReference>
<dbReference type="InterPro" id="IPR035921">
    <property type="entry name" value="F/V-ATP_Csub_sf"/>
</dbReference>
<dbReference type="NCBIfam" id="TIGR01260">
    <property type="entry name" value="ATP_synt_c"/>
    <property type="match status" value="1"/>
</dbReference>
<dbReference type="NCBIfam" id="NF005363">
    <property type="entry name" value="PRK06876.1"/>
    <property type="match status" value="1"/>
</dbReference>
<dbReference type="Pfam" id="PF00137">
    <property type="entry name" value="ATP-synt_C"/>
    <property type="match status" value="1"/>
</dbReference>
<dbReference type="PRINTS" id="PR00124">
    <property type="entry name" value="ATPASEC"/>
</dbReference>
<dbReference type="SUPFAM" id="SSF81333">
    <property type="entry name" value="F1F0 ATP synthase subunit C"/>
    <property type="match status" value="1"/>
</dbReference>
<dbReference type="PROSITE" id="PS00605">
    <property type="entry name" value="ATPASE_C"/>
    <property type="match status" value="1"/>
</dbReference>
<evidence type="ECO:0000255" key="1">
    <source>
        <dbReference type="HAMAP-Rule" id="MF_01396"/>
    </source>
</evidence>
<feature type="chain" id="PRO_1000184390" description="ATP synthase subunit c">
    <location>
        <begin position="1"/>
        <end position="84"/>
    </location>
</feature>
<feature type="transmembrane region" description="Helical" evidence="1">
    <location>
        <begin position="9"/>
        <end position="29"/>
    </location>
</feature>
<feature type="transmembrane region" description="Helical" evidence="1">
    <location>
        <begin position="54"/>
        <end position="74"/>
    </location>
</feature>
<feature type="site" description="Reversibly protonated during proton transport" evidence="1">
    <location>
        <position position="60"/>
    </location>
</feature>
<protein>
    <recommendedName>
        <fullName evidence="1">ATP synthase subunit c</fullName>
    </recommendedName>
    <alternativeName>
        <fullName evidence="1">ATP synthase F(0) sector subunit c</fullName>
    </alternativeName>
    <alternativeName>
        <fullName evidence="1">F-type ATPase subunit c</fullName>
        <shortName evidence="1">F-ATPase subunit c</shortName>
    </alternativeName>
    <alternativeName>
        <fullName evidence="1">Lipid-binding protein</fullName>
    </alternativeName>
</protein>
<keyword id="KW-0066">ATP synthesis</keyword>
<keyword id="KW-0997">Cell inner membrane</keyword>
<keyword id="KW-1003">Cell membrane</keyword>
<keyword id="KW-0138">CF(0)</keyword>
<keyword id="KW-0375">Hydrogen ion transport</keyword>
<keyword id="KW-0406">Ion transport</keyword>
<keyword id="KW-0446">Lipid-binding</keyword>
<keyword id="KW-0472">Membrane</keyword>
<keyword id="KW-0812">Transmembrane</keyword>
<keyword id="KW-1133">Transmembrane helix</keyword>
<keyword id="KW-0813">Transport</keyword>